<feature type="chain" id="PRO_0000345350" description="tRNA uridine 5-carboxymethylaminomethyl modification enzyme MnmG">
    <location>
        <begin position="1"/>
        <end position="633"/>
    </location>
</feature>
<feature type="binding site" evidence="1">
    <location>
        <begin position="14"/>
        <end position="19"/>
    </location>
    <ligand>
        <name>FAD</name>
        <dbReference type="ChEBI" id="CHEBI:57692"/>
    </ligand>
</feature>
<feature type="binding site" evidence="1">
    <location>
        <begin position="273"/>
        <end position="287"/>
    </location>
    <ligand>
        <name>NAD(+)</name>
        <dbReference type="ChEBI" id="CHEBI:57540"/>
    </ligand>
</feature>
<organism>
    <name type="scientific">Thermoanaerobacter pseudethanolicus (strain ATCC 33223 / 39E)</name>
    <name type="common">Clostridium thermohydrosulfuricum</name>
    <dbReference type="NCBI Taxonomy" id="340099"/>
    <lineage>
        <taxon>Bacteria</taxon>
        <taxon>Bacillati</taxon>
        <taxon>Bacillota</taxon>
        <taxon>Clostridia</taxon>
        <taxon>Thermoanaerobacterales</taxon>
        <taxon>Thermoanaerobacteraceae</taxon>
        <taxon>Thermoanaerobacter</taxon>
    </lineage>
</organism>
<sequence>MNFIAGEYDVAVVGLGHAGSEAALACARLGLKTVGFAVNLDSIALMACNPSIGGPAKAQLVREIDALGGEMAINTDKSLLQIRTLNTSKGPAVRSLRAQVDKKLYQMNMKYTLERQENLDIKQAEIVDILVEDNKVTGVVTKLGAIYKCKACIITTGTFLKGRVIIGDVSFDSGPSGLFPANQLSETLKRLGFKLMRFKTGTPARVDKRSIDFSKMEIQPGDEVITPFSYMHDKIEIEQLPCWLTYTNKRTHEIIMANIHRSPLFSGEITGVGVRYCPSIEDKVVKFPHKERHQIFIEPEGLNTYEMYVQGMSSSLPEDVQLEFLRTVPGLENVRVMRPAYAIEYDCIDPTQLKATLESKKIEGLYFAGQVNGTSGYEEAAAQGLMAGINAAMKLLNKPSVILDRSQAYIGVLIDDLVTKGTNEPYRMLTSRAEYRLLLRQDNADFRLTELGYKIGLVTEERYQKFLKKKIQLEKEMRRLLGVMIKPSEEVNNFLISKGSTPLVTGVDLYTLLKRPEIDYKSTKFLDKNRPDDILDSVAEQIDINIKYEGYIMKQLRQVEHFKALENKKIPEDIDYYQIHGLSNEAKEKLTKIRPTSIGQASRISGVSPADISVLLIYMQQLRRNKEDEEQIG</sequence>
<dbReference type="EMBL" id="CP000924">
    <property type="protein sequence ID" value="ABY95910.1"/>
    <property type="molecule type" value="Genomic_DNA"/>
</dbReference>
<dbReference type="RefSeq" id="WP_003867415.1">
    <property type="nucleotide sequence ID" value="NC_010321.1"/>
</dbReference>
<dbReference type="SMR" id="B0K8H8"/>
<dbReference type="STRING" id="340099.Teth39_2289"/>
<dbReference type="KEGG" id="tpd:Teth39_2289"/>
<dbReference type="eggNOG" id="COG0445">
    <property type="taxonomic scope" value="Bacteria"/>
</dbReference>
<dbReference type="HOGENOM" id="CLU_007831_2_2_9"/>
<dbReference type="Proteomes" id="UP000002156">
    <property type="component" value="Chromosome"/>
</dbReference>
<dbReference type="GO" id="GO:0005829">
    <property type="term" value="C:cytosol"/>
    <property type="evidence" value="ECO:0007669"/>
    <property type="project" value="TreeGrafter"/>
</dbReference>
<dbReference type="GO" id="GO:0050660">
    <property type="term" value="F:flavin adenine dinucleotide binding"/>
    <property type="evidence" value="ECO:0007669"/>
    <property type="project" value="UniProtKB-UniRule"/>
</dbReference>
<dbReference type="GO" id="GO:0030488">
    <property type="term" value="P:tRNA methylation"/>
    <property type="evidence" value="ECO:0007669"/>
    <property type="project" value="TreeGrafter"/>
</dbReference>
<dbReference type="GO" id="GO:0002098">
    <property type="term" value="P:tRNA wobble uridine modification"/>
    <property type="evidence" value="ECO:0007669"/>
    <property type="project" value="InterPro"/>
</dbReference>
<dbReference type="FunFam" id="1.10.10.1800:FF:000001">
    <property type="entry name" value="tRNA uridine 5-carboxymethylaminomethyl modification enzyme MnmG"/>
    <property type="match status" value="1"/>
</dbReference>
<dbReference type="FunFam" id="1.10.150.570:FF:000001">
    <property type="entry name" value="tRNA uridine 5-carboxymethylaminomethyl modification enzyme MnmG"/>
    <property type="match status" value="1"/>
</dbReference>
<dbReference type="FunFam" id="3.50.50.60:FF:000002">
    <property type="entry name" value="tRNA uridine 5-carboxymethylaminomethyl modification enzyme MnmG"/>
    <property type="match status" value="1"/>
</dbReference>
<dbReference type="Gene3D" id="3.50.50.60">
    <property type="entry name" value="FAD/NAD(P)-binding domain"/>
    <property type="match status" value="2"/>
</dbReference>
<dbReference type="Gene3D" id="1.10.150.570">
    <property type="entry name" value="GidA associated domain, C-terminal subdomain"/>
    <property type="match status" value="1"/>
</dbReference>
<dbReference type="Gene3D" id="1.10.10.1800">
    <property type="entry name" value="tRNA uridine 5-carboxymethylaminomethyl modification enzyme MnmG/GidA"/>
    <property type="match status" value="1"/>
</dbReference>
<dbReference type="HAMAP" id="MF_00129">
    <property type="entry name" value="MnmG_GidA"/>
    <property type="match status" value="1"/>
</dbReference>
<dbReference type="InterPro" id="IPR036188">
    <property type="entry name" value="FAD/NAD-bd_sf"/>
</dbReference>
<dbReference type="InterPro" id="IPR049312">
    <property type="entry name" value="GIDA_C_N"/>
</dbReference>
<dbReference type="InterPro" id="IPR004416">
    <property type="entry name" value="MnmG"/>
</dbReference>
<dbReference type="InterPro" id="IPR002218">
    <property type="entry name" value="MnmG-rel"/>
</dbReference>
<dbReference type="InterPro" id="IPR020595">
    <property type="entry name" value="MnmG-rel_CS"/>
</dbReference>
<dbReference type="InterPro" id="IPR026904">
    <property type="entry name" value="MnmG_C"/>
</dbReference>
<dbReference type="InterPro" id="IPR047001">
    <property type="entry name" value="MnmG_C_subdom"/>
</dbReference>
<dbReference type="InterPro" id="IPR044920">
    <property type="entry name" value="MnmG_C_subdom_sf"/>
</dbReference>
<dbReference type="InterPro" id="IPR040131">
    <property type="entry name" value="MnmG_N"/>
</dbReference>
<dbReference type="NCBIfam" id="TIGR00136">
    <property type="entry name" value="mnmG_gidA"/>
    <property type="match status" value="1"/>
</dbReference>
<dbReference type="PANTHER" id="PTHR11806">
    <property type="entry name" value="GLUCOSE INHIBITED DIVISION PROTEIN A"/>
    <property type="match status" value="1"/>
</dbReference>
<dbReference type="PANTHER" id="PTHR11806:SF0">
    <property type="entry name" value="PROTEIN MTO1 HOMOLOG, MITOCHONDRIAL"/>
    <property type="match status" value="1"/>
</dbReference>
<dbReference type="Pfam" id="PF01134">
    <property type="entry name" value="GIDA"/>
    <property type="match status" value="1"/>
</dbReference>
<dbReference type="Pfam" id="PF21680">
    <property type="entry name" value="GIDA_C_1st"/>
    <property type="match status" value="1"/>
</dbReference>
<dbReference type="Pfam" id="PF13932">
    <property type="entry name" value="SAM_GIDA_C"/>
    <property type="match status" value="1"/>
</dbReference>
<dbReference type="SMART" id="SM01228">
    <property type="entry name" value="GIDA_assoc_3"/>
    <property type="match status" value="1"/>
</dbReference>
<dbReference type="SUPFAM" id="SSF51905">
    <property type="entry name" value="FAD/NAD(P)-binding domain"/>
    <property type="match status" value="1"/>
</dbReference>
<dbReference type="PROSITE" id="PS01280">
    <property type="entry name" value="GIDA_1"/>
    <property type="match status" value="1"/>
</dbReference>
<dbReference type="PROSITE" id="PS01281">
    <property type="entry name" value="GIDA_2"/>
    <property type="match status" value="1"/>
</dbReference>
<reference key="1">
    <citation type="submission" date="2008-01" db="EMBL/GenBank/DDBJ databases">
        <title>Complete sequence of Thermoanaerobacter pseudethanolicus 39E.</title>
        <authorList>
            <person name="Copeland A."/>
            <person name="Lucas S."/>
            <person name="Lapidus A."/>
            <person name="Barry K."/>
            <person name="Glavina del Rio T."/>
            <person name="Dalin E."/>
            <person name="Tice H."/>
            <person name="Pitluck S."/>
            <person name="Bruce D."/>
            <person name="Goodwin L."/>
            <person name="Saunders E."/>
            <person name="Brettin T."/>
            <person name="Detter J.C."/>
            <person name="Han C."/>
            <person name="Schmutz J."/>
            <person name="Larimer F."/>
            <person name="Land M."/>
            <person name="Hauser L."/>
            <person name="Kyrpides N."/>
            <person name="Lykidis A."/>
            <person name="Hemme C."/>
            <person name="Fields M.W."/>
            <person name="He Z."/>
            <person name="Zhou J."/>
            <person name="Richardson P."/>
        </authorList>
    </citation>
    <scope>NUCLEOTIDE SEQUENCE [LARGE SCALE GENOMIC DNA]</scope>
    <source>
        <strain>ATCC 33223 / DSM 2355 / 39E</strain>
    </source>
</reference>
<comment type="function">
    <text evidence="1">NAD-binding protein involved in the addition of a carboxymethylaminomethyl (cmnm) group at the wobble position (U34) of certain tRNAs, forming tRNA-cmnm(5)s(2)U34.</text>
</comment>
<comment type="cofactor">
    <cofactor evidence="1">
        <name>FAD</name>
        <dbReference type="ChEBI" id="CHEBI:57692"/>
    </cofactor>
</comment>
<comment type="subunit">
    <text evidence="1">Homodimer. Heterotetramer of two MnmE and two MnmG subunits.</text>
</comment>
<comment type="subcellular location">
    <subcellularLocation>
        <location evidence="1">Cytoplasm</location>
    </subcellularLocation>
</comment>
<comment type="similarity">
    <text evidence="1">Belongs to the MnmG family.</text>
</comment>
<evidence type="ECO:0000255" key="1">
    <source>
        <dbReference type="HAMAP-Rule" id="MF_00129"/>
    </source>
</evidence>
<proteinExistence type="inferred from homology"/>
<name>MNMG_THEP3</name>
<protein>
    <recommendedName>
        <fullName evidence="1">tRNA uridine 5-carboxymethylaminomethyl modification enzyme MnmG</fullName>
    </recommendedName>
    <alternativeName>
        <fullName evidence="1">Glucose-inhibited division protein A</fullName>
    </alternativeName>
</protein>
<keyword id="KW-0963">Cytoplasm</keyword>
<keyword id="KW-0274">FAD</keyword>
<keyword id="KW-0285">Flavoprotein</keyword>
<keyword id="KW-0520">NAD</keyword>
<keyword id="KW-1185">Reference proteome</keyword>
<keyword id="KW-0819">tRNA processing</keyword>
<gene>
    <name evidence="1" type="primary">mnmG</name>
    <name evidence="1" type="synonym">gidA</name>
    <name type="ordered locus">Teth39_2289</name>
</gene>
<accession>B0K8H8</accession>